<name>KKX34_HETPE</name>
<dbReference type="SMR" id="P0DJ39"/>
<dbReference type="GO" id="GO:0005576">
    <property type="term" value="C:extracellular region"/>
    <property type="evidence" value="ECO:0007669"/>
    <property type="project" value="UniProtKB-SubCell"/>
</dbReference>
<dbReference type="GO" id="GO:0015459">
    <property type="term" value="F:potassium channel regulator activity"/>
    <property type="evidence" value="ECO:0007669"/>
    <property type="project" value="UniProtKB-KW"/>
</dbReference>
<dbReference type="GO" id="GO:0090729">
    <property type="term" value="F:toxin activity"/>
    <property type="evidence" value="ECO:0007669"/>
    <property type="project" value="UniProtKB-KW"/>
</dbReference>
<accession>P0DJ39</accession>
<protein>
    <recommendedName>
        <fullName evidence="5">Potassium channel toxin kappa-KTx 3.4</fullName>
    </recommendedName>
    <alternativeName>
        <fullName evidence="4">HSP040C.5</fullName>
    </alternativeName>
</protein>
<proteinExistence type="evidence at protein level"/>
<organism>
    <name type="scientific">Heterometrus petersii</name>
    <name type="common">Asian forest scorpion</name>
    <dbReference type="NCBI Taxonomy" id="754296"/>
    <lineage>
        <taxon>Eukaryota</taxon>
        <taxon>Metazoa</taxon>
        <taxon>Ecdysozoa</taxon>
        <taxon>Arthropoda</taxon>
        <taxon>Chelicerata</taxon>
        <taxon>Arachnida</taxon>
        <taxon>Scorpiones</taxon>
        <taxon>Iurida</taxon>
        <taxon>Scorpionoidea</taxon>
        <taxon>Scorpionidae</taxon>
        <taxon>Heterometrinae</taxon>
        <taxon>Heterometrus</taxon>
    </lineage>
</organism>
<reference key="1">
    <citation type="journal article" date="2010" name="Proteomics">
        <title>Molecular diversity of toxic components from the scorpion Heterometrus petersii venom revealed by proteomic and transcriptome analysis.</title>
        <authorList>
            <person name="Ma Y."/>
            <person name="Zhao Y."/>
            <person name="Zhao R."/>
            <person name="Zhang W."/>
            <person name="He Y."/>
            <person name="Wu Y."/>
            <person name="Cao Z."/>
            <person name="Guo L."/>
            <person name="Li W."/>
        </authorList>
    </citation>
    <scope>NUCLEOTIDE SEQUENCE [MRNA]</scope>
    <scope>IDENTIFICATION BY MASS SPECTROMETRY</scope>
    <source>
        <tissue>Venom</tissue>
        <tissue>Venom gland</tissue>
    </source>
</reference>
<reference key="2">
    <citation type="journal article" date="2012" name="Biochem. Pharmacol.">
        <title>Purification, molecular cloning and functional characterization of HelaTx1 (Heterometrus laoticus): the first member of a new kappa-KTX subfamily.</title>
        <authorList>
            <person name="Vandendriessche T."/>
            <person name="Kopljar I."/>
            <person name="Jenkins D.P."/>
            <person name="Diego-Garcia E."/>
            <person name="Abdel-Mottaleb Y."/>
            <person name="Vermassen E."/>
            <person name="Clynen E."/>
            <person name="Schoofs L."/>
            <person name="Wulff H."/>
            <person name="Snyders D."/>
            <person name="Tytgat J."/>
        </authorList>
    </citation>
    <scope>NOMENCLATURE</scope>
</reference>
<evidence type="ECO:0000250" key="1"/>
<evidence type="ECO:0000250" key="2">
    <source>
        <dbReference type="UniProtKB" id="P82850"/>
    </source>
</evidence>
<evidence type="ECO:0000255" key="3"/>
<evidence type="ECO:0000303" key="4">
    <source>
    </source>
</evidence>
<evidence type="ECO:0000303" key="5">
    <source>
    </source>
</evidence>
<evidence type="ECO:0000305" key="6"/>
<keyword id="KW-1015">Disulfide bond</keyword>
<keyword id="KW-0872">Ion channel impairing toxin</keyword>
<keyword id="KW-0528">Neurotoxin</keyword>
<keyword id="KW-0632">Potassium channel impairing toxin</keyword>
<keyword id="KW-0964">Secreted</keyword>
<keyword id="KW-0732">Signal</keyword>
<keyword id="KW-0800">Toxin</keyword>
<keyword id="KW-1220">Voltage-gated potassium channel impairing toxin</keyword>
<sequence length="64" mass="7294">MKSTLMTASLLILVLLSIIDYASVYAEFIDSEISLERQWINACFNVCMKISSDKKYCKYLCGKS</sequence>
<comment type="function">
    <text evidence="1">Potassium channel inhibitor (Kv).</text>
</comment>
<comment type="subcellular location">
    <subcellularLocation>
        <location evidence="1">Secreted</location>
    </subcellularLocation>
</comment>
<comment type="tissue specificity">
    <text evidence="6">Expressed by the venom gland.</text>
</comment>
<comment type="domain">
    <text evidence="2">Has the structural arrangement of two alpha-helices stabilized by disulfide bonds (CSalpha/alpha 2(S-S)).</text>
</comment>
<comment type="similarity">
    <text evidence="6">Belongs to the short scorpion toxin superfamily. Potassium channel inhibitor kappa-KTx family. Kappa-KTx 3 subfamily.</text>
</comment>
<feature type="signal peptide" evidence="3">
    <location>
        <begin position="1"/>
        <end position="26"/>
    </location>
</feature>
<feature type="propeptide" id="PRO_0000416808" evidence="1">
    <location>
        <begin position="27"/>
        <end position="36"/>
    </location>
</feature>
<feature type="peptide" id="PRO_0000416809" description="Potassium channel toxin kappa-KTx 3.4">
    <location>
        <begin position="38"/>
        <end position="64"/>
    </location>
</feature>
<feature type="disulfide bond" evidence="2">
    <location>
        <begin position="43"/>
        <end position="61"/>
    </location>
</feature>
<feature type="disulfide bond" evidence="2">
    <location>
        <begin position="47"/>
        <end position="57"/>
    </location>
</feature>